<comment type="function">
    <text evidence="1">Catalyzes the addition of meso-diaminopimelic acid to the nucleotide precursor UDP-N-acetylmuramoyl-L-alanyl-D-glutamate (UMAG) in the biosynthesis of bacterial cell-wall peptidoglycan.</text>
</comment>
<comment type="catalytic activity">
    <reaction evidence="1">
        <text>UDP-N-acetyl-alpha-D-muramoyl-L-alanyl-D-glutamate + meso-2,6-diaminopimelate + ATP = UDP-N-acetyl-alpha-D-muramoyl-L-alanyl-gamma-D-glutamyl-meso-2,6-diaminopimelate + ADP + phosphate + H(+)</text>
        <dbReference type="Rhea" id="RHEA:23676"/>
        <dbReference type="ChEBI" id="CHEBI:15378"/>
        <dbReference type="ChEBI" id="CHEBI:30616"/>
        <dbReference type="ChEBI" id="CHEBI:43474"/>
        <dbReference type="ChEBI" id="CHEBI:57791"/>
        <dbReference type="ChEBI" id="CHEBI:83900"/>
        <dbReference type="ChEBI" id="CHEBI:83905"/>
        <dbReference type="ChEBI" id="CHEBI:456216"/>
        <dbReference type="EC" id="6.3.2.13"/>
    </reaction>
</comment>
<comment type="cofactor">
    <cofactor evidence="1">
        <name>Mg(2+)</name>
        <dbReference type="ChEBI" id="CHEBI:18420"/>
    </cofactor>
</comment>
<comment type="pathway">
    <text evidence="1">Cell wall biogenesis; peptidoglycan biosynthesis.</text>
</comment>
<comment type="subcellular location">
    <subcellularLocation>
        <location evidence="1">Cytoplasm</location>
    </subcellularLocation>
</comment>
<comment type="PTM">
    <text evidence="1">Carboxylation is probably crucial for Mg(2+) binding and, consequently, for the gamma-phosphate positioning of ATP.</text>
</comment>
<comment type="similarity">
    <text evidence="1">Belongs to the MurCDEF family. MurE subfamily.</text>
</comment>
<protein>
    <recommendedName>
        <fullName evidence="1">UDP-N-acetylmuramoyl-L-alanyl-D-glutamate--2,6-diaminopimelate ligase</fullName>
        <ecNumber evidence="1">6.3.2.13</ecNumber>
    </recommendedName>
    <alternativeName>
        <fullName evidence="1">Meso-A2pm-adding enzyme</fullName>
    </alternativeName>
    <alternativeName>
        <fullName evidence="1">Meso-diaminopimelate-adding enzyme</fullName>
    </alternativeName>
    <alternativeName>
        <fullName evidence="1">UDP-MurNAc-L-Ala-D-Glu:meso-diaminopimelate ligase</fullName>
    </alternativeName>
    <alternativeName>
        <fullName evidence="1">UDP-MurNAc-tripeptide synthetase</fullName>
    </alternativeName>
    <alternativeName>
        <fullName evidence="1">UDP-N-acetylmuramyl-tripeptide synthetase</fullName>
    </alternativeName>
</protein>
<evidence type="ECO:0000255" key="1">
    <source>
        <dbReference type="HAMAP-Rule" id="MF_00208"/>
    </source>
</evidence>
<reference key="1">
    <citation type="journal article" date="1999" name="Nature">
        <title>Genomic sequence comparison of two unrelated isolates of the human gastric pathogen Helicobacter pylori.</title>
        <authorList>
            <person name="Alm R.A."/>
            <person name="Ling L.-S.L."/>
            <person name="Moir D.T."/>
            <person name="King B.L."/>
            <person name="Brown E.D."/>
            <person name="Doig P.C."/>
            <person name="Smith D.R."/>
            <person name="Noonan B."/>
            <person name="Guild B.C."/>
            <person name="deJonge B.L."/>
            <person name="Carmel G."/>
            <person name="Tummino P.J."/>
            <person name="Caruso A."/>
            <person name="Uria-Nickelsen M."/>
            <person name="Mills D.M."/>
            <person name="Ives C."/>
            <person name="Gibson R."/>
            <person name="Merberg D."/>
            <person name="Mills S.D."/>
            <person name="Jiang Q."/>
            <person name="Taylor D.E."/>
            <person name="Vovis G.F."/>
            <person name="Trust T.J."/>
        </authorList>
    </citation>
    <scope>NUCLEOTIDE SEQUENCE [LARGE SCALE GENOMIC DNA]</scope>
    <source>
        <strain>J99 / ATCC 700824</strain>
    </source>
</reference>
<sequence length="447" mass="50660">MKLKKTLTYQHHAYSFLSDNTNEVLENPKEILFVKTPLNEKYAPLIAEKNLAILDFNELKNYFDFKIKIVGITGTNGKTTTASLMYSLLLDLNKKTALLGTRGFFIDDKHIKEKGLTTPTLLELYSDLEEAIRLKCEYFIMEVSSHAIVQKRIAGLDFALKILTNITSDHLDFHQNIENYRDAKNSFFKDEGLKVINRDETNALFNPINARTYALDKKAHLNVQAFSLNPSISASLCYQHDLRDPNLKETALIHSPLLGRYNLYNILAGVLGVKLLTQLPLETIAPLLENFYGVKGRLEIVHSKPLVVVDFAHTTDGMQQVFESFKNQKITALFGAGGDRDKTKRPKMGAIASCYAHQIILTSDNPRSENEEDIIKDILKGINNSSKVIVEKDRKKAILNALENLKDDEVLLILGKGDENIQIFKDKTIFFSDQEVVKDYYLNLKQG</sequence>
<organism>
    <name type="scientific">Helicobacter pylori (strain J99 / ATCC 700824)</name>
    <name type="common">Campylobacter pylori J99</name>
    <dbReference type="NCBI Taxonomy" id="85963"/>
    <lineage>
        <taxon>Bacteria</taxon>
        <taxon>Pseudomonadati</taxon>
        <taxon>Campylobacterota</taxon>
        <taxon>Epsilonproteobacteria</taxon>
        <taxon>Campylobacterales</taxon>
        <taxon>Helicobacteraceae</taxon>
        <taxon>Helicobacter</taxon>
    </lineage>
</organism>
<feature type="chain" id="PRO_0000101903" description="UDP-N-acetylmuramoyl-L-alanyl-D-glutamate--2,6-diaminopimelate ligase">
    <location>
        <begin position="1"/>
        <end position="447"/>
    </location>
</feature>
<feature type="short sequence motif" description="Meso-diaminopimelate recognition motif">
    <location>
        <begin position="364"/>
        <end position="367"/>
    </location>
</feature>
<feature type="binding site" evidence="1">
    <location>
        <position position="21"/>
    </location>
    <ligand>
        <name>UDP-N-acetyl-alpha-D-muramoyl-L-alanyl-D-glutamate</name>
        <dbReference type="ChEBI" id="CHEBI:83900"/>
    </ligand>
</feature>
<feature type="binding site" evidence="1">
    <location>
        <begin position="74"/>
        <end position="80"/>
    </location>
    <ligand>
        <name>ATP</name>
        <dbReference type="ChEBI" id="CHEBI:30616"/>
    </ligand>
</feature>
<feature type="binding site" evidence="1">
    <location>
        <begin position="117"/>
        <end position="118"/>
    </location>
    <ligand>
        <name>UDP-N-acetyl-alpha-D-muramoyl-L-alanyl-D-glutamate</name>
        <dbReference type="ChEBI" id="CHEBI:83900"/>
    </ligand>
</feature>
<feature type="binding site" evidence="1">
    <location>
        <position position="144"/>
    </location>
    <ligand>
        <name>UDP-N-acetyl-alpha-D-muramoyl-L-alanyl-D-glutamate</name>
        <dbReference type="ChEBI" id="CHEBI:83900"/>
    </ligand>
</feature>
<feature type="binding site" evidence="1">
    <location>
        <position position="150"/>
    </location>
    <ligand>
        <name>UDP-N-acetyl-alpha-D-muramoyl-L-alanyl-D-glutamate</name>
        <dbReference type="ChEBI" id="CHEBI:83900"/>
    </ligand>
</feature>
<feature type="binding site" evidence="1">
    <location>
        <position position="152"/>
    </location>
    <ligand>
        <name>UDP-N-acetyl-alpha-D-muramoyl-L-alanyl-D-glutamate</name>
        <dbReference type="ChEBI" id="CHEBI:83900"/>
    </ligand>
</feature>
<feature type="binding site" evidence="1">
    <location>
        <position position="340"/>
    </location>
    <ligand>
        <name>meso-2,6-diaminopimelate</name>
        <dbReference type="ChEBI" id="CHEBI:57791"/>
    </ligand>
</feature>
<feature type="binding site" evidence="1">
    <location>
        <begin position="364"/>
        <end position="367"/>
    </location>
    <ligand>
        <name>meso-2,6-diaminopimelate</name>
        <dbReference type="ChEBI" id="CHEBI:57791"/>
    </ligand>
</feature>
<feature type="binding site" evidence="1">
    <location>
        <position position="415"/>
    </location>
    <ligand>
        <name>meso-2,6-diaminopimelate</name>
        <dbReference type="ChEBI" id="CHEBI:57791"/>
    </ligand>
</feature>
<feature type="binding site" evidence="1">
    <location>
        <position position="419"/>
    </location>
    <ligand>
        <name>meso-2,6-diaminopimelate</name>
        <dbReference type="ChEBI" id="CHEBI:57791"/>
    </ligand>
</feature>
<feature type="modified residue" description="N6-carboxylysine" evidence="1">
    <location>
        <position position="184"/>
    </location>
</feature>
<gene>
    <name evidence="1" type="primary">murE</name>
    <name type="ordered locus">jhp_1387</name>
</gene>
<dbReference type="EC" id="6.3.2.13" evidence="1"/>
<dbReference type="EMBL" id="AE001439">
    <property type="protein sequence ID" value="AAD06968.1"/>
    <property type="molecule type" value="Genomic_DNA"/>
</dbReference>
<dbReference type="PIR" id="D71812">
    <property type="entry name" value="D71812"/>
</dbReference>
<dbReference type="RefSeq" id="WP_000768761.1">
    <property type="nucleotide sequence ID" value="NC_000921.1"/>
</dbReference>
<dbReference type="SMR" id="Q9ZJC6"/>
<dbReference type="KEGG" id="hpj:jhp_1387"/>
<dbReference type="eggNOG" id="COG0769">
    <property type="taxonomic scope" value="Bacteria"/>
</dbReference>
<dbReference type="UniPathway" id="UPA00219"/>
<dbReference type="Proteomes" id="UP000000804">
    <property type="component" value="Chromosome"/>
</dbReference>
<dbReference type="GO" id="GO:0005737">
    <property type="term" value="C:cytoplasm"/>
    <property type="evidence" value="ECO:0007669"/>
    <property type="project" value="UniProtKB-SubCell"/>
</dbReference>
<dbReference type="GO" id="GO:0005524">
    <property type="term" value="F:ATP binding"/>
    <property type="evidence" value="ECO:0007669"/>
    <property type="project" value="UniProtKB-UniRule"/>
</dbReference>
<dbReference type="GO" id="GO:0000287">
    <property type="term" value="F:magnesium ion binding"/>
    <property type="evidence" value="ECO:0007669"/>
    <property type="project" value="UniProtKB-UniRule"/>
</dbReference>
<dbReference type="GO" id="GO:0004326">
    <property type="term" value="F:tetrahydrofolylpolyglutamate synthase activity"/>
    <property type="evidence" value="ECO:0007669"/>
    <property type="project" value="InterPro"/>
</dbReference>
<dbReference type="GO" id="GO:0008765">
    <property type="term" value="F:UDP-N-acetylmuramoylalanyl-D-glutamate-2,6-diaminopimelate ligase activity"/>
    <property type="evidence" value="ECO:0007669"/>
    <property type="project" value="UniProtKB-UniRule"/>
</dbReference>
<dbReference type="GO" id="GO:0051301">
    <property type="term" value="P:cell division"/>
    <property type="evidence" value="ECO:0007669"/>
    <property type="project" value="UniProtKB-KW"/>
</dbReference>
<dbReference type="GO" id="GO:0071555">
    <property type="term" value="P:cell wall organization"/>
    <property type="evidence" value="ECO:0007669"/>
    <property type="project" value="UniProtKB-KW"/>
</dbReference>
<dbReference type="GO" id="GO:0009252">
    <property type="term" value="P:peptidoglycan biosynthetic process"/>
    <property type="evidence" value="ECO:0007669"/>
    <property type="project" value="UniProtKB-UniRule"/>
</dbReference>
<dbReference type="GO" id="GO:0008360">
    <property type="term" value="P:regulation of cell shape"/>
    <property type="evidence" value="ECO:0007669"/>
    <property type="project" value="UniProtKB-KW"/>
</dbReference>
<dbReference type="Gene3D" id="3.90.190.20">
    <property type="entry name" value="Mur ligase, C-terminal domain"/>
    <property type="match status" value="1"/>
</dbReference>
<dbReference type="Gene3D" id="3.40.1190.10">
    <property type="entry name" value="Mur-like, catalytic domain"/>
    <property type="match status" value="1"/>
</dbReference>
<dbReference type="HAMAP" id="MF_00208">
    <property type="entry name" value="MurE"/>
    <property type="match status" value="1"/>
</dbReference>
<dbReference type="InterPro" id="IPR018109">
    <property type="entry name" value="Folylpolyglutamate_synth_CS"/>
</dbReference>
<dbReference type="InterPro" id="IPR036565">
    <property type="entry name" value="Mur-like_cat_sf"/>
</dbReference>
<dbReference type="InterPro" id="IPR004101">
    <property type="entry name" value="Mur_ligase_C"/>
</dbReference>
<dbReference type="InterPro" id="IPR036615">
    <property type="entry name" value="Mur_ligase_C_dom_sf"/>
</dbReference>
<dbReference type="InterPro" id="IPR013221">
    <property type="entry name" value="Mur_ligase_cen"/>
</dbReference>
<dbReference type="InterPro" id="IPR005761">
    <property type="entry name" value="UDP-N-AcMur-Glu-dNH2Pim_ligase"/>
</dbReference>
<dbReference type="NCBIfam" id="TIGR01085">
    <property type="entry name" value="murE"/>
    <property type="match status" value="1"/>
</dbReference>
<dbReference type="NCBIfam" id="NF001126">
    <property type="entry name" value="PRK00139.1-4"/>
    <property type="match status" value="1"/>
</dbReference>
<dbReference type="PANTHER" id="PTHR23135">
    <property type="entry name" value="MUR LIGASE FAMILY MEMBER"/>
    <property type="match status" value="1"/>
</dbReference>
<dbReference type="PANTHER" id="PTHR23135:SF4">
    <property type="entry name" value="UDP-N-ACETYLMURAMOYL-L-ALANYL-D-GLUTAMATE--2,6-DIAMINOPIMELATE LIGASE MURE HOMOLOG, CHLOROPLASTIC"/>
    <property type="match status" value="1"/>
</dbReference>
<dbReference type="Pfam" id="PF02875">
    <property type="entry name" value="Mur_ligase_C"/>
    <property type="match status" value="1"/>
</dbReference>
<dbReference type="Pfam" id="PF08245">
    <property type="entry name" value="Mur_ligase_M"/>
    <property type="match status" value="1"/>
</dbReference>
<dbReference type="SUPFAM" id="SSF53623">
    <property type="entry name" value="MurD-like peptide ligases, catalytic domain"/>
    <property type="match status" value="1"/>
</dbReference>
<dbReference type="SUPFAM" id="SSF53244">
    <property type="entry name" value="MurD-like peptide ligases, peptide-binding domain"/>
    <property type="match status" value="1"/>
</dbReference>
<proteinExistence type="inferred from homology"/>
<name>MURE_HELPJ</name>
<keyword id="KW-0067">ATP-binding</keyword>
<keyword id="KW-0131">Cell cycle</keyword>
<keyword id="KW-0132">Cell division</keyword>
<keyword id="KW-0133">Cell shape</keyword>
<keyword id="KW-0961">Cell wall biogenesis/degradation</keyword>
<keyword id="KW-0963">Cytoplasm</keyword>
<keyword id="KW-0436">Ligase</keyword>
<keyword id="KW-0460">Magnesium</keyword>
<keyword id="KW-0547">Nucleotide-binding</keyword>
<keyword id="KW-0573">Peptidoglycan synthesis</keyword>
<accession>Q9ZJC6</accession>